<organism>
    <name type="scientific">Canine calicivirus (strain 48)</name>
    <name type="common">CaCV</name>
    <dbReference type="NCBI Taxonomy" id="292348"/>
    <lineage>
        <taxon>Viruses</taxon>
        <taxon>Riboviria</taxon>
        <taxon>Orthornavirae</taxon>
        <taxon>Pisuviricota</taxon>
        <taxon>Pisoniviricetes</taxon>
        <taxon>Picornavirales</taxon>
        <taxon>Caliciviridae</taxon>
        <taxon>Vesivirus</taxon>
        <taxon>Canine vesivirus</taxon>
    </lineage>
</organism>
<evidence type="ECO:0000250" key="1">
    <source>
        <dbReference type="UniProtKB" id="P27409"/>
    </source>
</evidence>
<evidence type="ECO:0000250" key="2">
    <source>
        <dbReference type="UniProtKB" id="P54634"/>
    </source>
</evidence>
<evidence type="ECO:0000250" key="3">
    <source>
        <dbReference type="UniProtKB" id="Q04544"/>
    </source>
</evidence>
<evidence type="ECO:0000250" key="4">
    <source>
        <dbReference type="UniProtKB" id="Q66914"/>
    </source>
</evidence>
<evidence type="ECO:0000250" key="5">
    <source>
        <dbReference type="UniProtKB" id="Q69014"/>
    </source>
</evidence>
<evidence type="ECO:0000250" key="6">
    <source>
        <dbReference type="UniProtKB" id="Q6XDK8"/>
    </source>
</evidence>
<evidence type="ECO:0000255" key="7">
    <source>
        <dbReference type="PROSITE-ProRule" id="PRU00539"/>
    </source>
</evidence>
<evidence type="ECO:0000255" key="8">
    <source>
        <dbReference type="PROSITE-ProRule" id="PRU00551"/>
    </source>
</evidence>
<evidence type="ECO:0000255" key="9">
    <source>
        <dbReference type="PROSITE-ProRule" id="PRU01242"/>
    </source>
</evidence>
<evidence type="ECO:0000305" key="10"/>
<keyword id="KW-0067">ATP-binding</keyword>
<keyword id="KW-0191">Covalent protein-RNA linkage</keyword>
<keyword id="KW-1038">Host endoplasmic reticulum</keyword>
<keyword id="KW-1043">Host membrane</keyword>
<keyword id="KW-0945">Host-virus interaction</keyword>
<keyword id="KW-0378">Hydrolase</keyword>
<keyword id="KW-0472">Membrane</keyword>
<keyword id="KW-0547">Nucleotide-binding</keyword>
<keyword id="KW-0548">Nucleotidyltransferase</keyword>
<keyword id="KW-0597">Phosphoprotein</keyword>
<keyword id="KW-0645">Protease</keyword>
<keyword id="KW-0696">RNA-directed RNA polymerase</keyword>
<keyword id="KW-0788">Thiol protease</keyword>
<keyword id="KW-0808">Transferase</keyword>
<keyword id="KW-0693">Viral RNA replication</keyword>
<feature type="chain" id="PRO_0000341984" description="Genome polyprotein">
    <location>
        <begin position="1"/>
        <end position="1929"/>
    </location>
</feature>
<feature type="chain" id="PRO_0000341985" description="NS1">
    <location>
        <begin position="1"/>
        <end position="176"/>
    </location>
</feature>
<feature type="chain" id="PRO_0000036886" description="NS2">
    <location>
        <begin position="177"/>
        <end position="468"/>
    </location>
</feature>
<feature type="chain" id="PRO_0000036887" description="NTPase">
    <location>
        <begin position="469"/>
        <end position="825"/>
    </location>
</feature>
<feature type="chain" id="PRO_0000036888" description="NS4">
    <location>
        <begin position="826"/>
        <end position="1112"/>
    </location>
</feature>
<feature type="chain" id="PRO_0000036889" description="Viral genome-linked protein">
    <location>
        <begin position="1113"/>
        <end position="1232"/>
    </location>
</feature>
<feature type="chain" id="PRO_0000036891" description="Protease-polymerase p76">
    <location>
        <begin position="1233"/>
        <end position="1879"/>
    </location>
</feature>
<feature type="domain" description="SF3 helicase" evidence="8">
    <location>
        <begin position="597"/>
        <end position="753"/>
    </location>
</feature>
<feature type="domain" description="Peptidase C24" evidence="9">
    <location>
        <begin position="1235"/>
        <end position="1391"/>
    </location>
</feature>
<feature type="domain" description="RdRp catalytic" evidence="7">
    <location>
        <begin position="1643"/>
        <end position="1768"/>
    </location>
</feature>
<feature type="active site" description="For 3CLpro activity" evidence="9">
    <location>
        <position position="1271"/>
    </location>
</feature>
<feature type="active site" description="For 3CLpro activity" evidence="9">
    <location>
        <position position="1292"/>
    </location>
</feature>
<feature type="active site" description="For 3CLpro activity" evidence="9">
    <location>
        <position position="1355"/>
    </location>
</feature>
<feature type="binding site" evidence="8">
    <location>
        <begin position="623"/>
        <end position="630"/>
    </location>
    <ligand>
        <name>ATP</name>
        <dbReference type="ChEBI" id="CHEBI:30616"/>
    </ligand>
</feature>
<feature type="site" description="Cleavage; by Pro-Pol" evidence="4">
    <location>
        <begin position="176"/>
        <end position="177"/>
    </location>
</feature>
<feature type="site" description="Cleavage; by Pro-Pol" evidence="4">
    <location>
        <begin position="468"/>
        <end position="469"/>
    </location>
</feature>
<feature type="site" description="Cleavage; by Pro-Pol" evidence="4">
    <location>
        <begin position="825"/>
        <end position="826"/>
    </location>
</feature>
<feature type="site" description="Cleavage; by Pro-Pol" evidence="4">
    <location>
        <begin position="1111"/>
        <end position="1112"/>
    </location>
</feature>
<feature type="site" description="Cleavage; by Pro-Pol" evidence="4">
    <location>
        <begin position="1232"/>
        <end position="1233"/>
    </location>
</feature>
<feature type="modified residue" description="O-(5'-phospho-RNA)-tyrosine" evidence="1">
    <location>
        <position position="1137"/>
    </location>
</feature>
<comment type="function">
    <molecule>NS2</molecule>
    <text evidence="2 4">Together with NTPase and NS4, initiates the formation of the replication complex (By similarity). Induces the proliferation of the host smooth ER membranes forming long tubular structures (By similarity). These remodeled membranes probably form the viral factories that contain the replication complex (By similarity).</text>
</comment>
<comment type="function">
    <molecule>NTPase</molecule>
    <text evidence="2 3 4">Displays NTPase activity, but no helicase activity (By similarity). Induces the formation of convoluted membranes derived from the host ER (By similarity). These remodeled membranes probably form the viral factories that contain the replication complex (By similarity). Together with NS2 and NS4, initiates the formation of the replication complex (By similarity).</text>
</comment>
<comment type="function">
    <molecule>NS4</molecule>
    <text evidence="2 4">Probable key protein responsible for the formation of membrane alterations by the virus (By similarity). Induces the formation of convoluted membranes derived from the host ER (By similarity). These remodeled membranes probably form the viral factories that contain the replication complex (By similarity). Together with NS2 and NTPase, initiates the formation of the replication complex (By similarity).</text>
</comment>
<comment type="function">
    <molecule>Viral genome-linked protein</molecule>
    <text evidence="1">Viral genome-linked protein is covalently linked to the 5'-end of the positive-strand, negative-strand genomic RNAs and subgenomic RNA. Acts as a genome-linked replication primer. May recruit ribosome to viral RNA thereby promoting viral proteins translation. Interacts with host translation initiation complex to allow the translation of viral proteins.</text>
</comment>
<comment type="function">
    <molecule>Protease-polymerase p76</molecule>
    <text evidence="4 10">Protease-polymerase p76 processes the polyprotein: Pro-Pol is first released by autocleavage, then all other proteins are cleaved (By similarity). Cleaves host translation initiation factor eIF4G1, eIF4G2 and PABP1 thereby inducing a shutdown of host protein synthesis (By similarity). This shutdown may not prevent viral mRNA from being translated since viral Vpg replaces the cap (By similarity). Also functions as an RNA-directed RNA polymerase, which replicates genomic and antigenomic viral RNA by recognizing specific signals (Probable). Also transcribes a subgenomic mRNA by initiating RNA synthesis internally on antigenomic RNA (Probable). This sgRNA codes for structural proteins (Probable). Catalyzes the covalent attachment VPg with viral RNAs (By similarity).</text>
</comment>
<comment type="catalytic activity">
    <molecule>NTPase</molecule>
    <reaction evidence="3">
        <text>a ribonucleoside 5'-triphosphate + H2O = a ribonucleoside 5'-diphosphate + phosphate + H(+)</text>
        <dbReference type="Rhea" id="RHEA:23680"/>
        <dbReference type="ChEBI" id="CHEBI:15377"/>
        <dbReference type="ChEBI" id="CHEBI:15378"/>
        <dbReference type="ChEBI" id="CHEBI:43474"/>
        <dbReference type="ChEBI" id="CHEBI:57930"/>
        <dbReference type="ChEBI" id="CHEBI:61557"/>
        <dbReference type="EC" id="3.6.1.15"/>
    </reaction>
</comment>
<comment type="catalytic activity">
    <molecule>Protease-polymerase p76</molecule>
    <reaction evidence="7">
        <text>RNA(n) + a ribonucleoside 5'-triphosphate = RNA(n+1) + diphosphate</text>
        <dbReference type="Rhea" id="RHEA:21248"/>
        <dbReference type="Rhea" id="RHEA-COMP:14527"/>
        <dbReference type="Rhea" id="RHEA-COMP:17342"/>
        <dbReference type="ChEBI" id="CHEBI:33019"/>
        <dbReference type="ChEBI" id="CHEBI:61557"/>
        <dbReference type="ChEBI" id="CHEBI:140395"/>
        <dbReference type="EC" id="2.7.7.48"/>
    </reaction>
</comment>
<comment type="catalytic activity">
    <molecule>Protease-polymerase p76</molecule>
    <reaction evidence="9">
        <text>Endopeptidase with a preference for cleavage when the P1 position is occupied by Glu-|-Xaa and the P1' position is occupied by Gly-|-Yaa.</text>
        <dbReference type="EC" id="3.4.22.66"/>
    </reaction>
</comment>
<comment type="subunit">
    <molecule>NS2</molecule>
    <text evidence="4">Homodimer (By similarity). Interacts with NTPase, protein p30 and protease-polymerase p76 (By similarity).</text>
</comment>
<comment type="subunit">
    <molecule>Viral genome-linked protein</molecule>
    <text evidence="1 4">Interacts with capsid protein VP1 and protease-polymerase p76 (By similarity). Interacts with host IEF4e; this interaction plays a role in translation of viral proteins (By similarity).</text>
</comment>
<comment type="subunit">
    <molecule>Protease-polymerase p76</molecule>
    <text evidence="4">Homooligomer (By similarity). Interacts with Vpg, protein p32 and may interact with capsid protein VP1 (By similarity).</text>
</comment>
<comment type="subcellular location">
    <molecule>NS2</molecule>
    <subcellularLocation>
        <location evidence="4">Host endoplasmic reticulum membrane</location>
    </subcellularLocation>
</comment>
<comment type="subcellular location">
    <molecule>NS4</molecule>
    <subcellularLocation>
        <location evidence="4">Host endoplasmic reticulum membrane</location>
    </subcellularLocation>
</comment>
<comment type="subcellular location">
    <molecule>NTPase</molecule>
    <subcellularLocation>
        <location evidence="4">Host endoplasmic reticulum membrane</location>
    </subcellularLocation>
</comment>
<comment type="domain">
    <molecule>Viral genome-linked protein</molecule>
    <text evidence="1">Contains a compact core domain in the N-terminus half that is composed of a three-helix bundle.</text>
</comment>
<comment type="domain">
    <molecule>Protease-polymerase p76</molecule>
    <text evidence="10">Protease-polymerase is composed of two domains displaying two different catalytic activity. These activities may act independently.</text>
</comment>
<comment type="PTM">
    <molecule>Genome polyprotein</molecule>
    <text evidence="4">Specific enzymatic cleavages in vivo yield mature proteins (By similarity). Pro-Pol is first autocatalytically cleaved, then processes the whole polyprotein (By similarity).</text>
</comment>
<comment type="PTM">
    <molecule>Viral genome-linked protein</molecule>
    <text evidence="4">VPg is uridylylated by the polymerase and is covalently attached to the 5'-end of the polyadenylated genomic and subgenomic RNAs. This uridylylated form acts as a nucleotide-peptide primer for the polymerase.</text>
</comment>
<sequence>MASAIALSSSTAQNKITLKSVASRLQQTDDPDIRVWSQSVGFHLQFSNWKCANAFCRFVTDAYNLTPYKECARSITRQLTSLSNYLSAQTGVSVSGTQFLLSPSDVEVPVAKTGESVSDIMVPSYSVNGTSMEFDSMAQLAQALTTGFTFSVNDAQIGNAPAQTGESVSGTGFIAEACPSCALYDKCPNCTSELINDDGSSQSPGDIPHWTHHKIASGIVNILSSDMSSMEDDDFANIAAHVKKALGTNSHPANNDMSKDQLNWLLNIAEASLIRKADRTALPMNAARIAARRGWREKLFNEPADKLYTLLRKSKDSFQKSAIWGILFEKASNAKHYTEIVFQDIVKLIKEECNPSNNFYFKVMAQSFLDHFRMLVIDNPDPVANLPKFILKLKPLNLKMIIENHENTAEGWIVTLTAVAELYGWLEFAVDLVPKIVSELYDLLTSATQKCFSMVRELLTNLNILKAESFDFTNPFWYALAALLSYFVTGFLPNNAKCSAIKQTLNGATTLVAGITAIQKLAAMFSAWSNESVVDDLSTKVIGLTEADNPTVTQDIDAVTNLQIMAEQLKDQIKLKTLDPTFQPYLPVLRNLMSTTDSVISHCAKRKALATQRTAPVCIILTGPAGCGKTTLAYAIANRLSAQKPSVLNLNIDHHDAYTGNEVCIIDEFDSNPDSKFVEFVVEMVNTNPMLLNCDLIENKGKTFSSKYVIMTSNNETPVKPNSTRAPPFYRRVRIIDVTNPGVMSFKYENPGQEVPSYLFSNDFNHLSMSMRGFGAFSKTRVIDPEGRKTCGLEGPPGQRVDVDDIVRYMQRMYRENQMNFKSEAGNNRLKTPRFAFVTQRKHVDTVYKILAAAKTTYNGYYSLTKDSFDVNEGHNIGSSVFVVGDDKEIPHNCKIFRCNHLAMFRHPELAHIEGDNFRAALGVTMSDQDVTLMFYHIRGKHIQDEVRLDELPANHHIVTVHSVYDMAWALNRHLSLTGKWQALKAVYDLYMTPDILPAALRHWMDNTKFSSDHVVTQFIVPGGTIILETCNGARMWATSRRLIRAGGISNNNGPEGGFRFGSIAPRDIPWSEILREFLNLISLIWSRVKGATIVLTALLLYMKRYKPRSEAKGKTKGGRGAIRHGGKGIVLSDDEYDEWREFNMEKRMDMSVDEFLMLKHRAALGSDDTGAIQFRSWWTARQMRESTGLDHDDVTVIGKGGVRHEVHRTEIMKAPKQKKKSFAWGEDMYAEGDGKIVNHVNAIVPVTGLCGEHIGYAVHIGHGKCISLKHVLKTGSYVFNQKPIDVTFDGELAHFQIQQPPSSAAPVTFSSKPTRDPWGRSVSTEWKHDTYNTTAGKMYGSICWTATRTQPGDCGLPYVDRAGQVVGLHAGSGGDSAPGRKIVIPVTKFKLPSNTVLSNRFWKEEAPTISYKGLTVQETGVNKAVLKGTNYHVSPAHVDDYQDCTHQPANLGAQDERYPVSLTSIVINNLEPYKQPTQGPPTEVLNKAYNMLVQHYEPLIPKATTHLEMGDAFAALNVKTSCGPYITGRKKDHIDPETGKWDETLRNHINARWSLATQGVPIPHEYQLGLKDELRPKDKIAVGKRRLIWGCDVGVAVVAASAFKEVSSAIMAMSEFDFIQVGINMDGTAVETLYKRLYTPGTHRYCVDYSKWDSTQPPNVTRMSLELLRHFTDKSPVVDSAVATLSSPSIAVFGGVSFKTNGGLPSGMPLTSILNSLNHCLLVGSAIIQVLESKGVDVNWNIYDTIDLFTYGDDGVYIVPNFVHSVMPEVFSCLSSYGLKPTRTDKSSAPITEIPLSEPIEFLKRQFVRNQFGVRALLDRSSLIRQFYYIKGKNTMEWTKPPEQIDLTSRTAQLQVVMLYASQHGREFYKKCLDYYQLAMEYEGIKLDAPTYDEALAKYNANFNGVEDCDLLPAGYDEHRLDKIVFEN</sequence>
<name>POLG_CACV4</name>
<gene>
    <name type="ORF">ORF1</name>
</gene>
<accession>Q8V736</accession>
<accession>O72119</accession>
<organismHost>
    <name type="scientific">Canis lupus familiaris</name>
    <name type="common">Dog</name>
    <name type="synonym">Canis familiaris</name>
    <dbReference type="NCBI Taxonomy" id="9615"/>
</organismHost>
<dbReference type="EC" id="3.6.1.15" evidence="3"/>
<dbReference type="EC" id="2.7.7.48" evidence="5"/>
<dbReference type="EC" id="3.4.22.66" evidence="6"/>
<dbReference type="EMBL" id="AB070225">
    <property type="protein sequence ID" value="BAB83601.1"/>
    <property type="molecule type" value="Genomic_RNA"/>
</dbReference>
<dbReference type="EMBL" id="AF053720">
    <property type="protein sequence ID" value="AAC16445.1"/>
    <property type="molecule type" value="Genomic_RNA"/>
</dbReference>
<dbReference type="SMR" id="Q8V736"/>
<dbReference type="KEGG" id="vg:956316"/>
<dbReference type="Proteomes" id="UP000161743">
    <property type="component" value="Segment"/>
</dbReference>
<dbReference type="GO" id="GO:0044167">
    <property type="term" value="C:host cell endoplasmic reticulum membrane"/>
    <property type="evidence" value="ECO:0007669"/>
    <property type="project" value="UniProtKB-SubCell"/>
</dbReference>
<dbReference type="GO" id="GO:0016020">
    <property type="term" value="C:membrane"/>
    <property type="evidence" value="ECO:0007669"/>
    <property type="project" value="UniProtKB-KW"/>
</dbReference>
<dbReference type="GO" id="GO:0005524">
    <property type="term" value="F:ATP binding"/>
    <property type="evidence" value="ECO:0007669"/>
    <property type="project" value="UniProtKB-KW"/>
</dbReference>
<dbReference type="GO" id="GO:0016887">
    <property type="term" value="F:ATP hydrolysis activity"/>
    <property type="evidence" value="ECO:0007669"/>
    <property type="project" value="InterPro"/>
</dbReference>
<dbReference type="GO" id="GO:0004197">
    <property type="term" value="F:cysteine-type endopeptidase activity"/>
    <property type="evidence" value="ECO:0007669"/>
    <property type="project" value="InterPro"/>
</dbReference>
<dbReference type="GO" id="GO:0003723">
    <property type="term" value="F:RNA binding"/>
    <property type="evidence" value="ECO:0007669"/>
    <property type="project" value="InterPro"/>
</dbReference>
<dbReference type="GO" id="GO:0003724">
    <property type="term" value="F:RNA helicase activity"/>
    <property type="evidence" value="ECO:0007669"/>
    <property type="project" value="InterPro"/>
</dbReference>
<dbReference type="GO" id="GO:0003968">
    <property type="term" value="F:RNA-directed RNA polymerase activity"/>
    <property type="evidence" value="ECO:0007669"/>
    <property type="project" value="UniProtKB-KW"/>
</dbReference>
<dbReference type="GO" id="GO:0006351">
    <property type="term" value="P:DNA-templated transcription"/>
    <property type="evidence" value="ECO:0007669"/>
    <property type="project" value="InterPro"/>
</dbReference>
<dbReference type="GO" id="GO:0006508">
    <property type="term" value="P:proteolysis"/>
    <property type="evidence" value="ECO:0007669"/>
    <property type="project" value="UniProtKB-KW"/>
</dbReference>
<dbReference type="GO" id="GO:0039694">
    <property type="term" value="P:viral RNA genome replication"/>
    <property type="evidence" value="ECO:0007669"/>
    <property type="project" value="InterPro"/>
</dbReference>
<dbReference type="CDD" id="cd00009">
    <property type="entry name" value="AAA"/>
    <property type="match status" value="1"/>
</dbReference>
<dbReference type="CDD" id="cd23192">
    <property type="entry name" value="Caliciviridae_RdRp"/>
    <property type="match status" value="1"/>
</dbReference>
<dbReference type="Gene3D" id="1.10.260.110">
    <property type="match status" value="1"/>
</dbReference>
<dbReference type="Gene3D" id="1.20.960.20">
    <property type="match status" value="1"/>
</dbReference>
<dbReference type="Gene3D" id="3.30.70.270">
    <property type="match status" value="1"/>
</dbReference>
<dbReference type="Gene3D" id="6.10.140.320">
    <property type="match status" value="1"/>
</dbReference>
<dbReference type="Gene3D" id="6.10.250.3230">
    <property type="match status" value="1"/>
</dbReference>
<dbReference type="Gene3D" id="3.40.50.300">
    <property type="entry name" value="P-loop containing nucleotide triphosphate hydrolases"/>
    <property type="match status" value="1"/>
</dbReference>
<dbReference type="InterPro" id="IPR003593">
    <property type="entry name" value="AAA+_ATPase"/>
</dbReference>
<dbReference type="InterPro" id="IPR043502">
    <property type="entry name" value="DNA/RNA_pol_sf"/>
</dbReference>
<dbReference type="InterPro" id="IPR004004">
    <property type="entry name" value="Helic/Pol/Pept_Calicivir-typ"/>
</dbReference>
<dbReference type="InterPro" id="IPR000605">
    <property type="entry name" value="Helicase_SF3_ssDNA/RNA_vir"/>
</dbReference>
<dbReference type="InterPro" id="IPR014759">
    <property type="entry name" value="Helicase_SF3_ssRNA_vir"/>
</dbReference>
<dbReference type="InterPro" id="IPR027417">
    <property type="entry name" value="P-loop_NTPase"/>
</dbReference>
<dbReference type="InterPro" id="IPR000317">
    <property type="entry name" value="Peptidase_C24"/>
</dbReference>
<dbReference type="InterPro" id="IPR009003">
    <property type="entry name" value="Peptidase_S1_PA"/>
</dbReference>
<dbReference type="InterPro" id="IPR043128">
    <property type="entry name" value="Rev_trsase/Diguanyl_cyclase"/>
</dbReference>
<dbReference type="InterPro" id="IPR001205">
    <property type="entry name" value="RNA-dir_pol_C"/>
</dbReference>
<dbReference type="InterPro" id="IPR007094">
    <property type="entry name" value="RNA-dir_pol_PSvirus"/>
</dbReference>
<dbReference type="InterPro" id="IPR049434">
    <property type="entry name" value="VPg"/>
</dbReference>
<dbReference type="Pfam" id="PF03510">
    <property type="entry name" value="Peptidase_C24"/>
    <property type="match status" value="1"/>
</dbReference>
<dbReference type="Pfam" id="PF00680">
    <property type="entry name" value="RdRP_1"/>
    <property type="match status" value="1"/>
</dbReference>
<dbReference type="Pfam" id="PF00910">
    <property type="entry name" value="RNA_helicase"/>
    <property type="match status" value="1"/>
</dbReference>
<dbReference type="Pfam" id="PF20915">
    <property type="entry name" value="VPg"/>
    <property type="match status" value="1"/>
</dbReference>
<dbReference type="PRINTS" id="PR00916">
    <property type="entry name" value="2CENDOPTASE"/>
</dbReference>
<dbReference type="PRINTS" id="PR00918">
    <property type="entry name" value="CALICVIRUSNS"/>
</dbReference>
<dbReference type="SMART" id="SM00382">
    <property type="entry name" value="AAA"/>
    <property type="match status" value="1"/>
</dbReference>
<dbReference type="SUPFAM" id="SSF56672">
    <property type="entry name" value="DNA/RNA polymerases"/>
    <property type="match status" value="1"/>
</dbReference>
<dbReference type="SUPFAM" id="SSF52540">
    <property type="entry name" value="P-loop containing nucleoside triphosphate hydrolases"/>
    <property type="match status" value="1"/>
</dbReference>
<dbReference type="SUPFAM" id="SSF50494">
    <property type="entry name" value="Trypsin-like serine proteases"/>
    <property type="match status" value="1"/>
</dbReference>
<dbReference type="PROSITE" id="PS51894">
    <property type="entry name" value="CV_3CL_PRO"/>
    <property type="match status" value="1"/>
</dbReference>
<dbReference type="PROSITE" id="PS50507">
    <property type="entry name" value="RDRP_SSRNA_POS"/>
    <property type="match status" value="1"/>
</dbReference>
<dbReference type="PROSITE" id="PS51218">
    <property type="entry name" value="SF3_HELICASE_2"/>
    <property type="match status" value="1"/>
</dbReference>
<protein>
    <recommendedName>
        <fullName>Genome polyprotein</fullName>
    </recommendedName>
    <component>
        <recommendedName>
            <fullName>NS1</fullName>
        </recommendedName>
        <alternativeName>
            <fullName>Protein p18</fullName>
        </alternativeName>
    </component>
    <component>
        <recommendedName>
            <fullName>NS2</fullName>
        </recommendedName>
        <alternativeName>
            <fullName>Protein p32</fullName>
        </alternativeName>
    </component>
    <component>
        <recommendedName>
            <fullName>NTPase</fullName>
            <ecNumber evidence="3">3.6.1.15</ecNumber>
        </recommendedName>
        <alternativeName>
            <fullName evidence="10">NS3</fullName>
        </alternativeName>
        <alternativeName>
            <fullName>p39</fullName>
        </alternativeName>
    </component>
    <component>
        <recommendedName>
            <fullName evidence="10">NS4</fullName>
        </recommendedName>
        <alternativeName>
            <fullName evidence="1">3A-like protein p30</fullName>
        </alternativeName>
        <alternativeName>
            <fullName>Protein p30</fullName>
        </alternativeName>
    </component>
    <component>
        <recommendedName>
            <fullName>Viral genome-linked protein</fullName>
            <shortName>VPg</shortName>
        </recommendedName>
        <alternativeName>
            <fullName evidence="10">NS5</fullName>
        </alternativeName>
        <alternativeName>
            <fullName>p13</fullName>
        </alternativeName>
    </component>
    <component>
        <recommendedName>
            <fullName>Protease-polymerase p76</fullName>
            <shortName>Pro-Pol</shortName>
            <ecNumber evidence="5">2.7.7.48</ecNumber>
            <ecNumber evidence="6">3.4.22.66</ecNumber>
        </recommendedName>
        <alternativeName>
            <fullName evidence="10">NS6-7</fullName>
        </alternativeName>
    </component>
</protein>
<reference key="1">
    <citation type="journal article" date="2002" name="Virus Genes">
        <title>Complete nucleotide sequence, genome organization and phylogenic analysis of the canine calicivirus.</title>
        <authorList>
            <person name="Matsuura Y."/>
            <person name="Tohya Y."/>
            <person name="Nakamura K."/>
            <person name="Shimojima M."/>
            <person name="Roerink F."/>
            <person name="Mochizuki M."/>
            <person name="Takase K."/>
            <person name="Akashi H."/>
            <person name="Sugimura T."/>
        </authorList>
    </citation>
    <scope>NUCLEOTIDE SEQUENCE [GENOMIC RNA]</scope>
</reference>
<reference key="2">
    <citation type="journal article" date="1999" name="J. Gen. Virol.">
        <title>Organization of the canine calicivirus genome from the RNA polymerase gene to the poly(A) tail.</title>
        <authorList>
            <person name="Roerink F."/>
            <person name="Hashimoto M."/>
            <person name="Tohya Y."/>
            <person name="Mochizuki M."/>
        </authorList>
    </citation>
    <scope>NUCLEOTIDE SEQUENCE [GENOMIC RNA] OF 1571-1929</scope>
</reference>
<proteinExistence type="inferred from homology"/>